<evidence type="ECO:0000255" key="1">
    <source>
        <dbReference type="HAMAP-Rule" id="MF_01475"/>
    </source>
</evidence>
<evidence type="ECO:0000256" key="2">
    <source>
        <dbReference type="SAM" id="MobiDB-lite"/>
    </source>
</evidence>
<evidence type="ECO:0000305" key="3"/>
<keyword id="KW-0002">3D-structure</keyword>
<keyword id="KW-1185">Reference proteome</keyword>
<keyword id="KW-0687">Ribonucleoprotein</keyword>
<keyword id="KW-0689">Ribosomal protein</keyword>
<keyword id="KW-0694">RNA-binding</keyword>
<keyword id="KW-0699">rRNA-binding</keyword>
<dbReference type="EMBL" id="Y07778">
    <property type="protein sequence ID" value="CAA69095.1"/>
    <property type="molecule type" value="Genomic_DNA"/>
</dbReference>
<dbReference type="EMBL" id="CP000077">
    <property type="protein sequence ID" value="AAY79971.1"/>
    <property type="molecule type" value="Genomic_DNA"/>
</dbReference>
<dbReference type="RefSeq" id="WP_011277473.1">
    <property type="nucleotide sequence ID" value="NC_007181.1"/>
</dbReference>
<dbReference type="PDB" id="8HKU">
    <property type="method" value="EM"/>
    <property type="resolution" value="2.72 A"/>
    <property type="chains" value="L19E=2-145"/>
</dbReference>
<dbReference type="PDB" id="8HKV">
    <property type="method" value="EM"/>
    <property type="resolution" value="4.94 A"/>
    <property type="chains" value="L19E=2-145"/>
</dbReference>
<dbReference type="PDB" id="8HKY">
    <property type="method" value="EM"/>
    <property type="resolution" value="4.45 A"/>
    <property type="chains" value="L19E=2-145"/>
</dbReference>
<dbReference type="PDB" id="8HKZ">
    <property type="method" value="EM"/>
    <property type="resolution" value="4.78 A"/>
    <property type="chains" value="L19E=2-145"/>
</dbReference>
<dbReference type="PDB" id="8HL1">
    <property type="method" value="EM"/>
    <property type="resolution" value="3.93 A"/>
    <property type="chains" value="L19E=2-145"/>
</dbReference>
<dbReference type="PDB" id="8HL2">
    <property type="method" value="EM"/>
    <property type="resolution" value="4.10 A"/>
    <property type="chains" value="L19E=2-145"/>
</dbReference>
<dbReference type="PDB" id="8HL3">
    <property type="method" value="EM"/>
    <property type="resolution" value="4.80 A"/>
    <property type="chains" value="L19E=2-145"/>
</dbReference>
<dbReference type="PDB" id="8HL4">
    <property type="method" value="EM"/>
    <property type="resolution" value="4.62 A"/>
    <property type="chains" value="L19E=2-145"/>
</dbReference>
<dbReference type="PDB" id="8HL5">
    <property type="method" value="EM"/>
    <property type="resolution" value="5.72 A"/>
    <property type="chains" value="L19E=2-145"/>
</dbReference>
<dbReference type="PDBsum" id="8HKU"/>
<dbReference type="PDBsum" id="8HKV"/>
<dbReference type="PDBsum" id="8HKY"/>
<dbReference type="PDBsum" id="8HKZ"/>
<dbReference type="PDBsum" id="8HL1"/>
<dbReference type="PDBsum" id="8HL2"/>
<dbReference type="PDBsum" id="8HL3"/>
<dbReference type="PDBsum" id="8HL4"/>
<dbReference type="PDBsum" id="8HL5"/>
<dbReference type="EMDB" id="EMD-34860"/>
<dbReference type="EMDB" id="EMD-34861"/>
<dbReference type="EMDB" id="EMD-34863"/>
<dbReference type="EMDB" id="EMD-34864"/>
<dbReference type="EMDB" id="EMD-34866"/>
<dbReference type="EMDB" id="EMD-34867"/>
<dbReference type="EMDB" id="EMD-34868"/>
<dbReference type="EMDB" id="EMD-34869"/>
<dbReference type="EMDB" id="EMD-34870"/>
<dbReference type="SMR" id="O05639"/>
<dbReference type="STRING" id="330779.Saci_0579"/>
<dbReference type="GeneID" id="14551100"/>
<dbReference type="KEGG" id="sai:Saci_0579"/>
<dbReference type="PATRIC" id="fig|330779.12.peg.558"/>
<dbReference type="eggNOG" id="arCOG04089">
    <property type="taxonomic scope" value="Archaea"/>
</dbReference>
<dbReference type="HOGENOM" id="CLU_083919_1_1_2"/>
<dbReference type="Proteomes" id="UP000001018">
    <property type="component" value="Chromosome"/>
</dbReference>
<dbReference type="GO" id="GO:0022625">
    <property type="term" value="C:cytosolic large ribosomal subunit"/>
    <property type="evidence" value="ECO:0007669"/>
    <property type="project" value="InterPro"/>
</dbReference>
<dbReference type="GO" id="GO:0070180">
    <property type="term" value="F:large ribosomal subunit rRNA binding"/>
    <property type="evidence" value="ECO:0007669"/>
    <property type="project" value="UniProtKB-UniRule"/>
</dbReference>
<dbReference type="GO" id="GO:0003735">
    <property type="term" value="F:structural constituent of ribosome"/>
    <property type="evidence" value="ECO:0007669"/>
    <property type="project" value="InterPro"/>
</dbReference>
<dbReference type="GO" id="GO:0006412">
    <property type="term" value="P:translation"/>
    <property type="evidence" value="ECO:0007669"/>
    <property type="project" value="UniProtKB-UniRule"/>
</dbReference>
<dbReference type="CDD" id="cd01418">
    <property type="entry name" value="Ribosomal_L19e_A"/>
    <property type="match status" value="1"/>
</dbReference>
<dbReference type="FunFam" id="1.10.1200.240:FF:000003">
    <property type="entry name" value="50S ribosomal protein L19e"/>
    <property type="match status" value="1"/>
</dbReference>
<dbReference type="Gene3D" id="1.10.1200.240">
    <property type="match status" value="1"/>
</dbReference>
<dbReference type="Gene3D" id="1.10.1650.10">
    <property type="match status" value="1"/>
</dbReference>
<dbReference type="HAMAP" id="MF_01475">
    <property type="entry name" value="Ribosomal_eL19"/>
    <property type="match status" value="1"/>
</dbReference>
<dbReference type="InterPro" id="IPR035970">
    <property type="entry name" value="60S_ribosomal_eL19_sf"/>
</dbReference>
<dbReference type="InterPro" id="IPR039547">
    <property type="entry name" value="Ribosomal_eL19"/>
</dbReference>
<dbReference type="InterPro" id="IPR033936">
    <property type="entry name" value="Ribosomal_eL19_arc"/>
</dbReference>
<dbReference type="InterPro" id="IPR023638">
    <property type="entry name" value="Ribosomal_eL19_CS"/>
</dbReference>
<dbReference type="InterPro" id="IPR000196">
    <property type="entry name" value="Ribosomal_eL19_dom"/>
</dbReference>
<dbReference type="InterPro" id="IPR015972">
    <property type="entry name" value="Ribosomal_eL19_dom1"/>
</dbReference>
<dbReference type="NCBIfam" id="NF006343">
    <property type="entry name" value="PRK08570.1"/>
    <property type="match status" value="1"/>
</dbReference>
<dbReference type="PANTHER" id="PTHR10722">
    <property type="entry name" value="60S RIBOSOMAL PROTEIN L19"/>
    <property type="match status" value="1"/>
</dbReference>
<dbReference type="Pfam" id="PF01280">
    <property type="entry name" value="Ribosomal_L19e"/>
    <property type="match status" value="1"/>
</dbReference>
<dbReference type="Pfam" id="PF25476">
    <property type="entry name" value="Ribosomal_L19e_C"/>
    <property type="match status" value="1"/>
</dbReference>
<dbReference type="SMART" id="SM01416">
    <property type="entry name" value="Ribosomal_L19e"/>
    <property type="match status" value="1"/>
</dbReference>
<dbReference type="SUPFAM" id="SSF48140">
    <property type="entry name" value="Ribosomal protein L19 (L19e)"/>
    <property type="match status" value="1"/>
</dbReference>
<dbReference type="PROSITE" id="PS00526">
    <property type="entry name" value="RIBOSOMAL_L19E"/>
    <property type="match status" value="1"/>
</dbReference>
<accession>O05639</accession>
<accession>Q4JB58</accession>
<organism>
    <name type="scientific">Sulfolobus acidocaldarius (strain ATCC 33909 / DSM 639 / JCM 8929 / NBRC 15157 / NCIMB 11770)</name>
    <dbReference type="NCBI Taxonomy" id="330779"/>
    <lineage>
        <taxon>Archaea</taxon>
        <taxon>Thermoproteota</taxon>
        <taxon>Thermoprotei</taxon>
        <taxon>Sulfolobales</taxon>
        <taxon>Sulfolobaceae</taxon>
        <taxon>Sulfolobus</taxon>
    </lineage>
</organism>
<reference key="1">
    <citation type="journal article" date="1999" name="Mol. Phylogenet. Evol.">
        <title>The structure and evolution of the ribosomal proteins encoded in the spc operon of the archaeon (Crenarchaeota) Sulfolobus acidocaldarius.</title>
        <authorList>
            <person name="Yang D."/>
            <person name="Kusser I."/>
            <person name="Koepke A.K."/>
            <person name="Koop B.F."/>
            <person name="Matheson A.T."/>
        </authorList>
    </citation>
    <scope>NUCLEOTIDE SEQUENCE [GENOMIC DNA]</scope>
    <source>
        <strain>ATCC 33909 / DSM 639 / JCM 8929 / NBRC 15157 / NCIMB 11770</strain>
    </source>
</reference>
<reference key="2">
    <citation type="journal article" date="2005" name="J. Bacteriol.">
        <title>The genome of Sulfolobus acidocaldarius, a model organism of the Crenarchaeota.</title>
        <authorList>
            <person name="Chen L."/>
            <person name="Bruegger K."/>
            <person name="Skovgaard M."/>
            <person name="Redder P."/>
            <person name="She Q."/>
            <person name="Torarinsson E."/>
            <person name="Greve B."/>
            <person name="Awayez M."/>
            <person name="Zibat A."/>
            <person name="Klenk H.-P."/>
            <person name="Garrett R.A."/>
        </authorList>
    </citation>
    <scope>NUCLEOTIDE SEQUENCE [LARGE SCALE GENOMIC DNA]</scope>
    <source>
        <strain>ATCC 33909 / DSM 639 / JCM 8929 / NBRC 15157 / NCIMB 11770</strain>
    </source>
</reference>
<feature type="chain" id="PRO_0000131195" description="Large ribosomal subunit protein eL19">
    <location>
        <begin position="1"/>
        <end position="150"/>
    </location>
</feature>
<feature type="region of interest" description="Disordered" evidence="2">
    <location>
        <begin position="56"/>
        <end position="90"/>
    </location>
</feature>
<sequence>MPEFQLQRRLAADIAGVGLNNIKFNPERLEEVEEALTREDIKKLIKERAVIVNPKRGISSGRLKERKHKRRSKGEGRKHGSRKGKSGARTGDKEIWINKIRKIRRYIRWLRDNNVIDKHTYRLLYKRAKGNYFKNLSDVKSYLRQMGHKV</sequence>
<name>RL19E_SULAC</name>
<gene>
    <name evidence="1" type="primary">rpl19e</name>
    <name type="ordered locus">Saci_0579</name>
</gene>
<proteinExistence type="evidence at protein level"/>
<comment type="function">
    <text evidence="1">Binds to the 23S rRNA.</text>
</comment>
<comment type="subunit">
    <text evidence="1">Part of the 50S ribosomal subunit.</text>
</comment>
<comment type="similarity">
    <text evidence="1">Belongs to the eukaryotic ribosomal protein eL19 family.</text>
</comment>
<protein>
    <recommendedName>
        <fullName evidence="1">Large ribosomal subunit protein eL19</fullName>
    </recommendedName>
    <alternativeName>
        <fullName evidence="3">50S ribosomal protein L19e</fullName>
    </alternativeName>
</protein>